<sequence>MTQISERFLVQAHLDAKQPKALSPEEQAHYRAAIAAELKKQDAVMVAHYYCDPVIQALAEETGGCVADSLEMARFSNNHPASTVLVAGVRFMGETAKILNPEKRVFMPTLEATCSLDVGCPVDEFSAFCDQHPERTVVVYANTSAAVKARADWVVTSGCALEIVESLMDNGEKIIWAPDKHLGRYIQRETGADMLLWDGACIVHEEFKSKQLEDMKALYPEAAILVHPESPEAVIELADVVGSTSQMIAAAQRLPNKMFIVATDRGIFYKMQQLCPDKIFIEAPTAGNGAACRSCAHCPWMAMNTLERTLQCLREGGNEIFVEPALIPNAVRPLQRMLDFTQAARLRQAGNA</sequence>
<reference key="1">
    <citation type="journal article" date="2003" name="Proc. Natl. Acad. Sci. U.S.A.">
        <title>The complete genome sequence of the Arabidopsis and tomato pathogen Pseudomonas syringae pv. tomato DC3000.</title>
        <authorList>
            <person name="Buell C.R."/>
            <person name="Joardar V."/>
            <person name="Lindeberg M."/>
            <person name="Selengut J."/>
            <person name="Paulsen I.T."/>
            <person name="Gwinn M.L."/>
            <person name="Dodson R.J."/>
            <person name="DeBoy R.T."/>
            <person name="Durkin A.S."/>
            <person name="Kolonay J.F."/>
            <person name="Madupu R."/>
            <person name="Daugherty S.C."/>
            <person name="Brinkac L.M."/>
            <person name="Beanan M.J."/>
            <person name="Haft D.H."/>
            <person name="Nelson W.C."/>
            <person name="Davidsen T.M."/>
            <person name="Zafar N."/>
            <person name="Zhou L."/>
            <person name="Liu J."/>
            <person name="Yuan Q."/>
            <person name="Khouri H.M."/>
            <person name="Fedorova N.B."/>
            <person name="Tran B."/>
            <person name="Russell D."/>
            <person name="Berry K.J."/>
            <person name="Utterback T.R."/>
            <person name="Van Aken S.E."/>
            <person name="Feldblyum T.V."/>
            <person name="D'Ascenzo M."/>
            <person name="Deng W.-L."/>
            <person name="Ramos A.R."/>
            <person name="Alfano J.R."/>
            <person name="Cartinhour S."/>
            <person name="Chatterjee A.K."/>
            <person name="Delaney T.P."/>
            <person name="Lazarowitz S.G."/>
            <person name="Martin G.B."/>
            <person name="Schneider D.J."/>
            <person name="Tang X."/>
            <person name="Bender C.L."/>
            <person name="White O."/>
            <person name="Fraser C.M."/>
            <person name="Collmer A."/>
        </authorList>
    </citation>
    <scope>NUCLEOTIDE SEQUENCE [LARGE SCALE GENOMIC DNA]</scope>
    <source>
        <strain>ATCC BAA-871 / DC3000</strain>
    </source>
</reference>
<evidence type="ECO:0000255" key="1">
    <source>
        <dbReference type="HAMAP-Rule" id="MF_00567"/>
    </source>
</evidence>
<protein>
    <recommendedName>
        <fullName evidence="1">Quinolinate synthase</fullName>
        <ecNumber evidence="1">2.5.1.72</ecNumber>
    </recommendedName>
</protein>
<name>NADA_PSESM</name>
<proteinExistence type="inferred from homology"/>
<organism>
    <name type="scientific">Pseudomonas syringae pv. tomato (strain ATCC BAA-871 / DC3000)</name>
    <dbReference type="NCBI Taxonomy" id="223283"/>
    <lineage>
        <taxon>Bacteria</taxon>
        <taxon>Pseudomonadati</taxon>
        <taxon>Pseudomonadota</taxon>
        <taxon>Gammaproteobacteria</taxon>
        <taxon>Pseudomonadales</taxon>
        <taxon>Pseudomonadaceae</taxon>
        <taxon>Pseudomonas</taxon>
    </lineage>
</organism>
<gene>
    <name evidence="1" type="primary">nadA</name>
    <name type="ordered locus">PSPTO_3959</name>
</gene>
<comment type="function">
    <text evidence="1">Catalyzes the condensation of iminoaspartate with dihydroxyacetone phosphate to form quinolinate.</text>
</comment>
<comment type="catalytic activity">
    <reaction evidence="1">
        <text>iminosuccinate + dihydroxyacetone phosphate = quinolinate + phosphate + 2 H2O + H(+)</text>
        <dbReference type="Rhea" id="RHEA:25888"/>
        <dbReference type="ChEBI" id="CHEBI:15377"/>
        <dbReference type="ChEBI" id="CHEBI:15378"/>
        <dbReference type="ChEBI" id="CHEBI:29959"/>
        <dbReference type="ChEBI" id="CHEBI:43474"/>
        <dbReference type="ChEBI" id="CHEBI:57642"/>
        <dbReference type="ChEBI" id="CHEBI:77875"/>
        <dbReference type="EC" id="2.5.1.72"/>
    </reaction>
    <physiologicalReaction direction="left-to-right" evidence="1">
        <dbReference type="Rhea" id="RHEA:25889"/>
    </physiologicalReaction>
</comment>
<comment type="cofactor">
    <cofactor evidence="1">
        <name>[4Fe-4S] cluster</name>
        <dbReference type="ChEBI" id="CHEBI:49883"/>
    </cofactor>
    <text evidence="1">Binds 1 [4Fe-4S] cluster per subunit.</text>
</comment>
<comment type="pathway">
    <text evidence="1">Cofactor biosynthesis; NAD(+) biosynthesis; quinolinate from iminoaspartate: step 1/1.</text>
</comment>
<comment type="subcellular location">
    <subcellularLocation>
        <location evidence="1">Cytoplasm</location>
    </subcellularLocation>
</comment>
<comment type="similarity">
    <text evidence="1">Belongs to the quinolinate synthase family. Type 1 subfamily.</text>
</comment>
<accession>Q87Y50</accession>
<dbReference type="EC" id="2.5.1.72" evidence="1"/>
<dbReference type="EMBL" id="AE016853">
    <property type="protein sequence ID" value="AAO57420.1"/>
    <property type="molecule type" value="Genomic_DNA"/>
</dbReference>
<dbReference type="RefSeq" id="NP_793725.1">
    <property type="nucleotide sequence ID" value="NC_004578.1"/>
</dbReference>
<dbReference type="RefSeq" id="WP_011104803.1">
    <property type="nucleotide sequence ID" value="NC_004578.1"/>
</dbReference>
<dbReference type="SMR" id="Q87Y50"/>
<dbReference type="STRING" id="223283.PSPTO_3959"/>
<dbReference type="GeneID" id="1185634"/>
<dbReference type="KEGG" id="pst:PSPTO_3959"/>
<dbReference type="PATRIC" id="fig|223283.9.peg.4058"/>
<dbReference type="eggNOG" id="COG0379">
    <property type="taxonomic scope" value="Bacteria"/>
</dbReference>
<dbReference type="HOGENOM" id="CLU_047382_1_0_6"/>
<dbReference type="OrthoDB" id="9801204at2"/>
<dbReference type="PhylomeDB" id="Q87Y50"/>
<dbReference type="UniPathway" id="UPA00253">
    <property type="reaction ID" value="UER00327"/>
</dbReference>
<dbReference type="Proteomes" id="UP000002515">
    <property type="component" value="Chromosome"/>
</dbReference>
<dbReference type="GO" id="GO:0005829">
    <property type="term" value="C:cytosol"/>
    <property type="evidence" value="ECO:0007669"/>
    <property type="project" value="TreeGrafter"/>
</dbReference>
<dbReference type="GO" id="GO:0051539">
    <property type="term" value="F:4 iron, 4 sulfur cluster binding"/>
    <property type="evidence" value="ECO:0007669"/>
    <property type="project" value="UniProtKB-KW"/>
</dbReference>
<dbReference type="GO" id="GO:0046872">
    <property type="term" value="F:metal ion binding"/>
    <property type="evidence" value="ECO:0007669"/>
    <property type="project" value="UniProtKB-KW"/>
</dbReference>
<dbReference type="GO" id="GO:0008987">
    <property type="term" value="F:quinolinate synthetase A activity"/>
    <property type="evidence" value="ECO:0007669"/>
    <property type="project" value="UniProtKB-UniRule"/>
</dbReference>
<dbReference type="GO" id="GO:0034628">
    <property type="term" value="P:'de novo' NAD biosynthetic process from L-aspartate"/>
    <property type="evidence" value="ECO:0007669"/>
    <property type="project" value="TreeGrafter"/>
</dbReference>
<dbReference type="FunFam" id="3.40.50.10800:FF:000001">
    <property type="entry name" value="Quinolinate synthase A"/>
    <property type="match status" value="1"/>
</dbReference>
<dbReference type="FunFam" id="3.40.50.10800:FF:000003">
    <property type="entry name" value="Quinolinate synthase A"/>
    <property type="match status" value="1"/>
</dbReference>
<dbReference type="Gene3D" id="3.40.50.10800">
    <property type="entry name" value="NadA-like"/>
    <property type="match status" value="3"/>
</dbReference>
<dbReference type="HAMAP" id="MF_00567">
    <property type="entry name" value="NadA_type1"/>
    <property type="match status" value="1"/>
</dbReference>
<dbReference type="InterPro" id="IPR003473">
    <property type="entry name" value="NadA"/>
</dbReference>
<dbReference type="InterPro" id="IPR036094">
    <property type="entry name" value="NadA_sf"/>
</dbReference>
<dbReference type="InterPro" id="IPR023513">
    <property type="entry name" value="Quinolinate_synth_A_type1"/>
</dbReference>
<dbReference type="NCBIfam" id="TIGR00550">
    <property type="entry name" value="nadA"/>
    <property type="match status" value="1"/>
</dbReference>
<dbReference type="NCBIfam" id="NF006877">
    <property type="entry name" value="PRK09375.1-1"/>
    <property type="match status" value="1"/>
</dbReference>
<dbReference type="NCBIfam" id="NF006878">
    <property type="entry name" value="PRK09375.1-2"/>
    <property type="match status" value="1"/>
</dbReference>
<dbReference type="PANTHER" id="PTHR30573:SF0">
    <property type="entry name" value="QUINOLINATE SYNTHASE, CHLOROPLASTIC"/>
    <property type="match status" value="1"/>
</dbReference>
<dbReference type="PANTHER" id="PTHR30573">
    <property type="entry name" value="QUINOLINATE SYNTHETASE A"/>
    <property type="match status" value="1"/>
</dbReference>
<dbReference type="Pfam" id="PF02445">
    <property type="entry name" value="NadA"/>
    <property type="match status" value="1"/>
</dbReference>
<dbReference type="SUPFAM" id="SSF142754">
    <property type="entry name" value="NadA-like"/>
    <property type="match status" value="1"/>
</dbReference>
<feature type="chain" id="PRO_0000155767" description="Quinolinate synthase">
    <location>
        <begin position="1"/>
        <end position="352"/>
    </location>
</feature>
<feature type="binding site" evidence="1">
    <location>
        <position position="48"/>
    </location>
    <ligand>
        <name>iminosuccinate</name>
        <dbReference type="ChEBI" id="CHEBI:77875"/>
    </ligand>
</feature>
<feature type="binding site" evidence="1">
    <location>
        <position position="69"/>
    </location>
    <ligand>
        <name>iminosuccinate</name>
        <dbReference type="ChEBI" id="CHEBI:77875"/>
    </ligand>
</feature>
<feature type="binding site" evidence="1">
    <location>
        <position position="114"/>
    </location>
    <ligand>
        <name>[4Fe-4S] cluster</name>
        <dbReference type="ChEBI" id="CHEBI:49883"/>
    </ligand>
</feature>
<feature type="binding site" evidence="1">
    <location>
        <begin position="140"/>
        <end position="142"/>
    </location>
    <ligand>
        <name>iminosuccinate</name>
        <dbReference type="ChEBI" id="CHEBI:77875"/>
    </ligand>
</feature>
<feature type="binding site" evidence="1">
    <location>
        <position position="157"/>
    </location>
    <ligand>
        <name>iminosuccinate</name>
        <dbReference type="ChEBI" id="CHEBI:77875"/>
    </ligand>
</feature>
<feature type="binding site" evidence="1">
    <location>
        <position position="201"/>
    </location>
    <ligand>
        <name>[4Fe-4S] cluster</name>
        <dbReference type="ChEBI" id="CHEBI:49883"/>
    </ligand>
</feature>
<feature type="binding site" evidence="1">
    <location>
        <begin position="227"/>
        <end position="229"/>
    </location>
    <ligand>
        <name>iminosuccinate</name>
        <dbReference type="ChEBI" id="CHEBI:77875"/>
    </ligand>
</feature>
<feature type="binding site" evidence="1">
    <location>
        <position position="244"/>
    </location>
    <ligand>
        <name>iminosuccinate</name>
        <dbReference type="ChEBI" id="CHEBI:77875"/>
    </ligand>
</feature>
<feature type="binding site" evidence="1">
    <location>
        <position position="298"/>
    </location>
    <ligand>
        <name>[4Fe-4S] cluster</name>
        <dbReference type="ChEBI" id="CHEBI:49883"/>
    </ligand>
</feature>
<keyword id="KW-0004">4Fe-4S</keyword>
<keyword id="KW-0963">Cytoplasm</keyword>
<keyword id="KW-0408">Iron</keyword>
<keyword id="KW-0411">Iron-sulfur</keyword>
<keyword id="KW-0479">Metal-binding</keyword>
<keyword id="KW-0662">Pyridine nucleotide biosynthesis</keyword>
<keyword id="KW-1185">Reference proteome</keyword>
<keyword id="KW-0808">Transferase</keyword>